<proteinExistence type="evidence at protein level"/>
<sequence length="37" mass="4297">MEPNPNRQPVELNRTSLYLGLLLILVLALLFSSYFFN</sequence>
<accession>P12241</accession>
<accession>Q8GI48</accession>
<gene>
    <name evidence="1" type="primary">psbL</name>
</gene>
<keyword id="KW-0002">3D-structure</keyword>
<keyword id="KW-0903">Direct protein sequencing</keyword>
<keyword id="KW-0472">Membrane</keyword>
<keyword id="KW-0602">Photosynthesis</keyword>
<keyword id="KW-0604">Photosystem II</keyword>
<keyword id="KW-0674">Reaction center</keyword>
<keyword id="KW-0793">Thylakoid</keyword>
<keyword id="KW-0812">Transmembrane</keyword>
<keyword id="KW-1133">Transmembrane helix</keyword>
<reference key="1">
    <citation type="journal article" date="2002" name="Plant Cell Physiol.">
        <title>Low-molecular-mass polypeptide components of a photosystem II preparation from the thermophilic cyanobacterium Thermosynechococcus vulcanus.</title>
        <authorList>
            <person name="Kashino Y."/>
            <person name="Koike H."/>
            <person name="Yoshio M."/>
            <person name="Egashira H."/>
            <person name="Ikeuchi M."/>
            <person name="Pakrasi H.B."/>
            <person name="Satoh K."/>
        </authorList>
    </citation>
    <scope>NUCLEOTIDE SEQUENCE [GENOMIC DNA]</scope>
    <scope>PROTEIN SEQUENCE OF 1-13</scope>
    <scope>COMPOSITION OF PHOTOSYSTEM II</scope>
    <scope>SUBUNIT</scope>
</reference>
<reference key="2">
    <citation type="journal article" date="1989" name="FEBS Lett.">
        <title>Identification of psbI and psbL gene products in cyanobacterial photosystem II reaction center preparation.</title>
        <authorList>
            <person name="Ikeuchi M."/>
            <person name="Koike H."/>
            <person name="Inoue Y."/>
        </authorList>
    </citation>
    <scope>PROTEIN SEQUENCE OF 1-17</scope>
</reference>
<reference key="3">
    <citation type="journal article" date="2009" name="Proc. Natl. Acad. Sci. U.S.A.">
        <title>Location of chloride and its possible functions in oxygen-evolving photosystem II revealed by X-ray crystallography.</title>
        <authorList>
            <person name="Kawakami K."/>
            <person name="Umena Y."/>
            <person name="Kamiya N."/>
            <person name="Shen J.R."/>
        </authorList>
    </citation>
    <scope>X-RAY CRYSTALLOGRAPHY (3.7 ANGSTROMS) IN PHOTOSYSTEM II</scope>
    <scope>FUNCTION</scope>
    <scope>COFACTOR</scope>
    <scope>SUBUNIT</scope>
    <scope>SUBCELLULAR LOCATION</scope>
</reference>
<reference key="4">
    <citation type="journal article" date="2011" name="Nature">
        <title>Crystal structure of oxygen-evolving photosystem II at a resolution of 1.9 A.</title>
        <authorList>
            <person name="Umena Y."/>
            <person name="Kawakami K."/>
            <person name="Shen J.R."/>
            <person name="Kamiya N."/>
        </authorList>
    </citation>
    <scope>X-RAY CRYSTALLOGRAPHY (1.9 ANGSTROMS) IN PHOTOSYSTEM II</scope>
    <scope>FUNCTION</scope>
    <scope>COFACTOR</scope>
    <scope>SUBUNIT</scope>
    <scope>SUBCELLULAR LOCATION</scope>
    <scope>TOPOLOGY</scope>
</reference>
<reference key="5">
    <citation type="journal article" date="2013" name="Proc. Natl. Acad. Sci. U.S.A.">
        <title>Structure of Sr-substituted photosystem II at 2.1 A resolution and its implications in the mechanism of water oxidation.</title>
        <authorList>
            <person name="Koua F.H."/>
            <person name="Umena Y."/>
            <person name="Kawakami K."/>
            <person name="Shen J.R."/>
        </authorList>
    </citation>
    <scope>X-RAY CRYSTALLOGRAPHY (2.1 ANGSTROMS) IN PHOTOSYSTEM II</scope>
    <scope>FUNCTION</scope>
    <scope>COFACTOR</scope>
    <scope>SUBUNIT</scope>
    <scope>SUBCELLULAR LOCATION</scope>
</reference>
<protein>
    <recommendedName>
        <fullName evidence="1">Photosystem II reaction center protein L</fullName>
        <shortName evidence="1">PSII-L</shortName>
    </recommendedName>
</protein>
<name>PSBL_THEVL</name>
<feature type="chain" id="PRO_0000219794" description="Photosystem II reaction center protein L">
    <location>
        <begin position="1"/>
        <end position="37"/>
    </location>
</feature>
<feature type="topological domain" description="Cytoplasmic" evidence="4">
    <location>
        <begin position="1"/>
        <end position="14"/>
    </location>
</feature>
<feature type="transmembrane region" description="Helical" evidence="4">
    <location>
        <begin position="15"/>
        <end position="30"/>
    </location>
</feature>
<feature type="topological domain" description="Lumenal" evidence="4">
    <location>
        <begin position="31"/>
        <end position="37"/>
    </location>
</feature>
<feature type="helix" evidence="6">
    <location>
        <begin position="14"/>
        <end position="36"/>
    </location>
</feature>
<dbReference type="EMBL" id="AB086860">
    <property type="protein sequence ID" value="BAC53636.1"/>
    <property type="molecule type" value="Genomic_DNA"/>
</dbReference>
<dbReference type="PIR" id="S05033">
    <property type="entry name" value="S05033"/>
</dbReference>
<dbReference type="PDB" id="3A0B">
    <property type="method" value="X-ray"/>
    <property type="resolution" value="3.70 A"/>
    <property type="chains" value="L/l=1-37"/>
</dbReference>
<dbReference type="PDB" id="3A0H">
    <property type="method" value="X-ray"/>
    <property type="resolution" value="4.00 A"/>
    <property type="chains" value="L/l=1-37"/>
</dbReference>
<dbReference type="PDB" id="3WU2">
    <property type="method" value="X-ray"/>
    <property type="resolution" value="1.90 A"/>
    <property type="chains" value="L/l=1-37"/>
</dbReference>
<dbReference type="PDB" id="4IL6">
    <property type="method" value="X-ray"/>
    <property type="resolution" value="2.10 A"/>
    <property type="chains" value="L/l=1-37"/>
</dbReference>
<dbReference type="PDB" id="4UB6">
    <property type="method" value="X-ray"/>
    <property type="resolution" value="1.95 A"/>
    <property type="chains" value="L/l=1-37"/>
</dbReference>
<dbReference type="PDB" id="4UB8">
    <property type="method" value="X-ray"/>
    <property type="resolution" value="1.95 A"/>
    <property type="chains" value="L/l=1-37"/>
</dbReference>
<dbReference type="PDB" id="5B5E">
    <property type="method" value="X-ray"/>
    <property type="resolution" value="1.87 A"/>
    <property type="chains" value="L/l=1-37"/>
</dbReference>
<dbReference type="PDB" id="5B66">
    <property type="method" value="X-ray"/>
    <property type="resolution" value="1.85 A"/>
    <property type="chains" value="L/l=1-37"/>
</dbReference>
<dbReference type="PDB" id="5GTH">
    <property type="method" value="X-ray"/>
    <property type="resolution" value="2.50 A"/>
    <property type="chains" value="L/l=1-37"/>
</dbReference>
<dbReference type="PDB" id="5GTI">
    <property type="method" value="X-ray"/>
    <property type="resolution" value="2.50 A"/>
    <property type="chains" value="L/l=1-37"/>
</dbReference>
<dbReference type="PDB" id="5V2C">
    <property type="method" value="X-ray"/>
    <property type="resolution" value="1.90 A"/>
    <property type="chains" value="L/l=1-37"/>
</dbReference>
<dbReference type="PDB" id="5WS5">
    <property type="method" value="X-ray"/>
    <property type="resolution" value="2.35 A"/>
    <property type="chains" value="L/l=1-37"/>
</dbReference>
<dbReference type="PDB" id="5WS6">
    <property type="method" value="X-ray"/>
    <property type="resolution" value="2.35 A"/>
    <property type="chains" value="L/l=1-37"/>
</dbReference>
<dbReference type="PDB" id="6JLJ">
    <property type="method" value="X-ray"/>
    <property type="resolution" value="2.15 A"/>
    <property type="chains" value="L/l=1-37"/>
</dbReference>
<dbReference type="PDB" id="6JLK">
    <property type="method" value="X-ray"/>
    <property type="resolution" value="2.15 A"/>
    <property type="chains" value="L/l=1-37"/>
</dbReference>
<dbReference type="PDB" id="6JLL">
    <property type="method" value="X-ray"/>
    <property type="resolution" value="2.15 A"/>
    <property type="chains" value="L/l=1-37"/>
</dbReference>
<dbReference type="PDB" id="6JLM">
    <property type="method" value="X-ray"/>
    <property type="resolution" value="2.35 A"/>
    <property type="chains" value="L/l=1-37"/>
</dbReference>
<dbReference type="PDB" id="6JLN">
    <property type="method" value="X-ray"/>
    <property type="resolution" value="2.40 A"/>
    <property type="chains" value="L/l=1-37"/>
</dbReference>
<dbReference type="PDB" id="6JLO">
    <property type="method" value="X-ray"/>
    <property type="resolution" value="2.40 A"/>
    <property type="chains" value="L/l=1-37"/>
</dbReference>
<dbReference type="PDB" id="6JLP">
    <property type="method" value="X-ray"/>
    <property type="resolution" value="2.50 A"/>
    <property type="chains" value="L/l=1-37"/>
</dbReference>
<dbReference type="PDB" id="7CJI">
    <property type="method" value="X-ray"/>
    <property type="resolution" value="2.35 A"/>
    <property type="chains" value="L/l=1-37"/>
</dbReference>
<dbReference type="PDB" id="7CJJ">
    <property type="method" value="X-ray"/>
    <property type="resolution" value="2.40 A"/>
    <property type="chains" value="L/l=1-37"/>
</dbReference>
<dbReference type="PDB" id="7COU">
    <property type="method" value="X-ray"/>
    <property type="resolution" value="2.25 A"/>
    <property type="chains" value="L/l=1-37"/>
</dbReference>
<dbReference type="PDB" id="7CZL">
    <property type="method" value="EM"/>
    <property type="resolution" value="3.78 A"/>
    <property type="chains" value="L/l=1-37"/>
</dbReference>
<dbReference type="PDB" id="7D1T">
    <property type="method" value="EM"/>
    <property type="resolution" value="1.95 A"/>
    <property type="chains" value="L/l=1-37"/>
</dbReference>
<dbReference type="PDB" id="7D1U">
    <property type="method" value="EM"/>
    <property type="resolution" value="2.08 A"/>
    <property type="chains" value="L/l=1-37"/>
</dbReference>
<dbReference type="PDB" id="7DXA">
    <property type="method" value="EM"/>
    <property type="resolution" value="3.14 A"/>
    <property type="chains" value="l=1-37"/>
</dbReference>
<dbReference type="PDB" id="7DXH">
    <property type="method" value="EM"/>
    <property type="resolution" value="3.14 A"/>
    <property type="chains" value="l=1-37"/>
</dbReference>
<dbReference type="PDB" id="7EDA">
    <property type="method" value="EM"/>
    <property type="resolution" value="2.78 A"/>
    <property type="chains" value="L=1-37"/>
</dbReference>
<dbReference type="PDB" id="8GN0">
    <property type="method" value="X-ray"/>
    <property type="resolution" value="2.15 A"/>
    <property type="chains" value="L/l=1-37"/>
</dbReference>
<dbReference type="PDB" id="8GN1">
    <property type="method" value="X-ray"/>
    <property type="resolution" value="2.10 A"/>
    <property type="chains" value="L/l=1-37"/>
</dbReference>
<dbReference type="PDB" id="8GN2">
    <property type="method" value="X-ray"/>
    <property type="resolution" value="1.95 A"/>
    <property type="chains" value="L/l=1-37"/>
</dbReference>
<dbReference type="PDB" id="8IR5">
    <property type="method" value="X-ray"/>
    <property type="resolution" value="2.15 A"/>
    <property type="chains" value="L/l=1-37"/>
</dbReference>
<dbReference type="PDB" id="8IR6">
    <property type="method" value="X-ray"/>
    <property type="resolution" value="2.20 A"/>
    <property type="chains" value="L/l=1-37"/>
</dbReference>
<dbReference type="PDB" id="8IR7">
    <property type="method" value="X-ray"/>
    <property type="resolution" value="2.25 A"/>
    <property type="chains" value="L/l=1-37"/>
</dbReference>
<dbReference type="PDB" id="8IR8">
    <property type="method" value="X-ray"/>
    <property type="resolution" value="2.25 A"/>
    <property type="chains" value="L/l=1-37"/>
</dbReference>
<dbReference type="PDB" id="8IR9">
    <property type="method" value="X-ray"/>
    <property type="resolution" value="2.20 A"/>
    <property type="chains" value="L/l=1-37"/>
</dbReference>
<dbReference type="PDB" id="8IRA">
    <property type="method" value="X-ray"/>
    <property type="resolution" value="2.20 A"/>
    <property type="chains" value="L/l=1-37"/>
</dbReference>
<dbReference type="PDB" id="8IRB">
    <property type="method" value="X-ray"/>
    <property type="resolution" value="2.30 A"/>
    <property type="chains" value="L/l=1-37"/>
</dbReference>
<dbReference type="PDB" id="8IRC">
    <property type="method" value="X-ray"/>
    <property type="resolution" value="2.25 A"/>
    <property type="chains" value="L/l=1-37"/>
</dbReference>
<dbReference type="PDB" id="8IRD">
    <property type="method" value="X-ray"/>
    <property type="resolution" value="2.30 A"/>
    <property type="chains" value="L/l=1-37"/>
</dbReference>
<dbReference type="PDB" id="8IRE">
    <property type="method" value="X-ray"/>
    <property type="resolution" value="2.25 A"/>
    <property type="chains" value="L/l=1-37"/>
</dbReference>
<dbReference type="PDB" id="8IRF">
    <property type="method" value="X-ray"/>
    <property type="resolution" value="2.25 A"/>
    <property type="chains" value="L/l=1-37"/>
</dbReference>
<dbReference type="PDB" id="8IRG">
    <property type="method" value="X-ray"/>
    <property type="resolution" value="2.30 A"/>
    <property type="chains" value="L/l=1-37"/>
</dbReference>
<dbReference type="PDB" id="8IRH">
    <property type="method" value="X-ray"/>
    <property type="resolution" value="2.25 A"/>
    <property type="chains" value="L/l=1-37"/>
</dbReference>
<dbReference type="PDB" id="8IRI">
    <property type="method" value="X-ray"/>
    <property type="resolution" value="2.25 A"/>
    <property type="chains" value="L/l=1-37"/>
</dbReference>
<dbReference type="PDBsum" id="3A0B"/>
<dbReference type="PDBsum" id="3A0H"/>
<dbReference type="PDBsum" id="3WU2"/>
<dbReference type="PDBsum" id="4IL6"/>
<dbReference type="PDBsum" id="4UB6"/>
<dbReference type="PDBsum" id="4UB8"/>
<dbReference type="PDBsum" id="5B5E"/>
<dbReference type="PDBsum" id="5B66"/>
<dbReference type="PDBsum" id="5GTH"/>
<dbReference type="PDBsum" id="5GTI"/>
<dbReference type="PDBsum" id="5V2C"/>
<dbReference type="PDBsum" id="5WS5"/>
<dbReference type="PDBsum" id="5WS6"/>
<dbReference type="PDBsum" id="6JLJ"/>
<dbReference type="PDBsum" id="6JLK"/>
<dbReference type="PDBsum" id="6JLL"/>
<dbReference type="PDBsum" id="6JLM"/>
<dbReference type="PDBsum" id="6JLN"/>
<dbReference type="PDBsum" id="6JLO"/>
<dbReference type="PDBsum" id="6JLP"/>
<dbReference type="PDBsum" id="7CJI"/>
<dbReference type="PDBsum" id="7CJJ"/>
<dbReference type="PDBsum" id="7COU"/>
<dbReference type="PDBsum" id="7CZL"/>
<dbReference type="PDBsum" id="7D1T"/>
<dbReference type="PDBsum" id="7D1U"/>
<dbReference type="PDBsum" id="7DXA"/>
<dbReference type="PDBsum" id="7DXH"/>
<dbReference type="PDBsum" id="7EDA"/>
<dbReference type="PDBsum" id="8GN0"/>
<dbReference type="PDBsum" id="8GN1"/>
<dbReference type="PDBsum" id="8GN2"/>
<dbReference type="PDBsum" id="8IR5"/>
<dbReference type="PDBsum" id="8IR6"/>
<dbReference type="PDBsum" id="8IR7"/>
<dbReference type="PDBsum" id="8IR8"/>
<dbReference type="PDBsum" id="8IR9"/>
<dbReference type="PDBsum" id="8IRA"/>
<dbReference type="PDBsum" id="8IRB"/>
<dbReference type="PDBsum" id="8IRC"/>
<dbReference type="PDBsum" id="8IRD"/>
<dbReference type="PDBsum" id="8IRE"/>
<dbReference type="PDBsum" id="8IRF"/>
<dbReference type="PDBsum" id="8IRG"/>
<dbReference type="PDBsum" id="8IRH"/>
<dbReference type="PDBsum" id="8IRI"/>
<dbReference type="EMDB" id="EMD-30511"/>
<dbReference type="EMDB" id="EMD-30547"/>
<dbReference type="EMDB" id="EMD-30548"/>
<dbReference type="EMDB" id="EMD-30902"/>
<dbReference type="EMDB" id="EMD-30909"/>
<dbReference type="EMDB" id="EMD-31062"/>
<dbReference type="SMR" id="P12241"/>
<dbReference type="DIP" id="DIP-48864N"/>
<dbReference type="IntAct" id="P12241">
    <property type="interactions" value="1"/>
</dbReference>
<dbReference type="EvolutionaryTrace" id="P12241"/>
<dbReference type="GO" id="GO:0009539">
    <property type="term" value="C:photosystem II reaction center"/>
    <property type="evidence" value="ECO:0007669"/>
    <property type="project" value="InterPro"/>
</dbReference>
<dbReference type="GO" id="GO:0031676">
    <property type="term" value="C:plasma membrane-derived thylakoid membrane"/>
    <property type="evidence" value="ECO:0007669"/>
    <property type="project" value="UniProtKB-SubCell"/>
</dbReference>
<dbReference type="GO" id="GO:0015979">
    <property type="term" value="P:photosynthesis"/>
    <property type="evidence" value="ECO:0007669"/>
    <property type="project" value="UniProtKB-UniRule"/>
</dbReference>
<dbReference type="HAMAP" id="MF_01317">
    <property type="entry name" value="PSII_PsbL"/>
    <property type="match status" value="1"/>
</dbReference>
<dbReference type="InterPro" id="IPR003372">
    <property type="entry name" value="PSII_PsbL"/>
</dbReference>
<dbReference type="InterPro" id="IPR037266">
    <property type="entry name" value="PSII_PsbL_sf"/>
</dbReference>
<dbReference type="NCBIfam" id="NF001972">
    <property type="entry name" value="PRK00753.1"/>
    <property type="match status" value="1"/>
</dbReference>
<dbReference type="Pfam" id="PF02419">
    <property type="entry name" value="PsbL"/>
    <property type="match status" value="1"/>
</dbReference>
<dbReference type="SUPFAM" id="SSF161017">
    <property type="entry name" value="Photosystem II reaction center protein L, PsbL"/>
    <property type="match status" value="1"/>
</dbReference>
<organism>
    <name type="scientific">Thermostichus vulcanus</name>
    <name type="common">Synechococcus vulcanus</name>
    <dbReference type="NCBI Taxonomy" id="32053"/>
    <lineage>
        <taxon>Bacteria</taxon>
        <taxon>Bacillati</taxon>
        <taxon>Cyanobacteriota</taxon>
        <taxon>Cyanophyceae</taxon>
        <taxon>Thermostichales</taxon>
        <taxon>Thermostichaceae</taxon>
        <taxon>Thermostichus</taxon>
    </lineage>
</organism>
<comment type="function">
    <text evidence="1 3 4 5">One of the components of the core complex of photosystem II (PSII). PSII is a light-driven water:plastoquinone oxidoreductase that uses light energy to abstract electrons from H(2)O, generating O(2) and a proton gradient subsequently used for ATP formation. It consists of a core antenna complex that captures photons, and an electron transfer chain that converts photonic excitation into a charge separation. This subunit is found at the monomer-monomer interface and is required for correct PSII assembly and/or dimerization. This subunit may make specific contacts with lipid(s) (PubMed:21499260).</text>
</comment>
<comment type="cofactor">
    <text evidence="3 4 5">PSII binds multiple chlorophylls, carotenoids and specific lipids.</text>
</comment>
<comment type="subunit">
    <text evidence="1 2 3 4 5">PSII is composed of 1 copy each of membrane proteins PsbA, PsbB, PsbC, PsbD, PsbE, PsbF, PsbH, PsbI, PsbJ, PsbK, PsbL, PsbM, PsbT, PsbX, PsbY, PsbZ, Psb30/Ycf12, peripheral proteins PsbO, CyanoQ (PsbQ), PsbU, PsbV and a large number of cofactors. It forms dimeric complexes.</text>
</comment>
<comment type="subcellular location">
    <subcellularLocation>
        <location evidence="1 3 4 5">Cellular thylakoid membrane</location>
        <topology evidence="1 3 4 5">Single-pass membrane protein</topology>
    </subcellularLocation>
</comment>
<comment type="similarity">
    <text evidence="1">Belongs to the PsbL family.</text>
</comment>
<evidence type="ECO:0000255" key="1">
    <source>
        <dbReference type="HAMAP-Rule" id="MF_01317"/>
    </source>
</evidence>
<evidence type="ECO:0000269" key="2">
    <source>
    </source>
</evidence>
<evidence type="ECO:0000269" key="3">
    <source>
    </source>
</evidence>
<evidence type="ECO:0000269" key="4">
    <source>
    </source>
</evidence>
<evidence type="ECO:0000269" key="5">
    <source>
    </source>
</evidence>
<evidence type="ECO:0007829" key="6">
    <source>
        <dbReference type="PDB" id="5B66"/>
    </source>
</evidence>